<protein>
    <recommendedName>
        <fullName evidence="1">5'-methylthioadenosine/S-adenosylhomocysteine nucleosidase</fullName>
        <shortName evidence="1">MTA/SAH nucleosidase</shortName>
        <shortName evidence="1">MTAN</shortName>
        <ecNumber evidence="1">3.2.2.9</ecNumber>
    </recommendedName>
    <alternativeName>
        <fullName evidence="1">5'-deoxyadenosine nucleosidase</fullName>
        <shortName evidence="1">DOA nucleosidase</shortName>
        <shortName evidence="1">dAdo nucleosidase</shortName>
    </alternativeName>
    <alternativeName>
        <fullName evidence="1">5'-methylthioadenosine nucleosidase</fullName>
        <shortName evidence="1">MTA nucleosidase</shortName>
    </alternativeName>
    <alternativeName>
        <fullName evidence="1">S-adenosylhomocysteine nucleosidase</fullName>
        <shortName evidence="1">AdoHcy nucleosidase</shortName>
        <shortName evidence="1">SAH nucleosidase</shortName>
        <shortName evidence="1">SRH nucleosidase</shortName>
    </alternativeName>
</protein>
<reference key="1">
    <citation type="journal article" date="2006" name="BMC Genomics">
        <title>Complete genome sequence of Shigella flexneri 5b and comparison with Shigella flexneri 2a.</title>
        <authorList>
            <person name="Nie H."/>
            <person name="Yang F."/>
            <person name="Zhang X."/>
            <person name="Yang J."/>
            <person name="Chen L."/>
            <person name="Wang J."/>
            <person name="Xiong Z."/>
            <person name="Peng J."/>
            <person name="Sun L."/>
            <person name="Dong J."/>
            <person name="Xue Y."/>
            <person name="Xu X."/>
            <person name="Chen S."/>
            <person name="Yao Z."/>
            <person name="Shen Y."/>
            <person name="Jin Q."/>
        </authorList>
    </citation>
    <scope>NUCLEOTIDE SEQUENCE [LARGE SCALE GENOMIC DNA]</scope>
    <source>
        <strain>8401</strain>
    </source>
</reference>
<accession>Q0T847</accession>
<comment type="function">
    <text evidence="1">Catalyzes the irreversible cleavage of the glycosidic bond in both 5'-methylthioadenosine (MTA) and S-adenosylhomocysteine (SAH/AdoHcy) to adenine and the corresponding thioribose, 5'-methylthioribose and S-ribosylhomocysteine, respectively. Also cleaves 5'-deoxyadenosine, a toxic by-product of radical S-adenosylmethionine (SAM) enzymes, into 5-deoxyribose and adenine. Thus, is required for in vivo function of the radical SAM enzymes biotin synthase and lipoic acid synthase, that are inhibited by 5'-deoxyadenosine accumulation.</text>
</comment>
<comment type="catalytic activity">
    <reaction evidence="1">
        <text>S-adenosyl-L-homocysteine + H2O = S-(5-deoxy-D-ribos-5-yl)-L-homocysteine + adenine</text>
        <dbReference type="Rhea" id="RHEA:17805"/>
        <dbReference type="ChEBI" id="CHEBI:15377"/>
        <dbReference type="ChEBI" id="CHEBI:16708"/>
        <dbReference type="ChEBI" id="CHEBI:57856"/>
        <dbReference type="ChEBI" id="CHEBI:58195"/>
        <dbReference type="EC" id="3.2.2.9"/>
    </reaction>
</comment>
<comment type="catalytic activity">
    <reaction evidence="1">
        <text>S-methyl-5'-thioadenosine + H2O = 5-(methylsulfanyl)-D-ribose + adenine</text>
        <dbReference type="Rhea" id="RHEA:13617"/>
        <dbReference type="ChEBI" id="CHEBI:15377"/>
        <dbReference type="ChEBI" id="CHEBI:16708"/>
        <dbReference type="ChEBI" id="CHEBI:17509"/>
        <dbReference type="ChEBI" id="CHEBI:78440"/>
        <dbReference type="EC" id="3.2.2.9"/>
    </reaction>
</comment>
<comment type="catalytic activity">
    <reaction evidence="1">
        <text>5'-deoxyadenosine + H2O = 5-deoxy-D-ribose + adenine</text>
        <dbReference type="Rhea" id="RHEA:29859"/>
        <dbReference type="ChEBI" id="CHEBI:15377"/>
        <dbReference type="ChEBI" id="CHEBI:16708"/>
        <dbReference type="ChEBI" id="CHEBI:17319"/>
        <dbReference type="ChEBI" id="CHEBI:149540"/>
        <dbReference type="EC" id="3.2.2.9"/>
    </reaction>
    <physiologicalReaction direction="left-to-right" evidence="1">
        <dbReference type="Rhea" id="RHEA:29860"/>
    </physiologicalReaction>
</comment>
<comment type="pathway">
    <text evidence="1">Amino-acid biosynthesis; L-methionine biosynthesis via salvage pathway; S-methyl-5-thio-alpha-D-ribose 1-phosphate from S-methyl-5'-thioadenosine (hydrolase route): step 1/2.</text>
</comment>
<comment type="subunit">
    <text evidence="1">Homodimer.</text>
</comment>
<comment type="similarity">
    <text evidence="1">Belongs to the PNP/UDP phosphorylase family. MtnN subfamily.</text>
</comment>
<name>MTNN_SHIF8</name>
<sequence length="232" mass="24354">MKIGIIGAMEEEVTLLRDKIENRQTISLGGCEIYTGQLNGTEVALLKSGIGKVAAALGATLLLEHCKPDVIINTGSAGGLAPTLKVGDIVVSDEARYHDADVTAFGYEYGQLPGCPAGFKADDKLIAAAEACIAELNLNAVRGLIVSGDAFINGSVGLAKIRHNFPQAIAVEMEATAIAHVCHNFNVPFVVVRAISDVADQQSHLSFDEFLAVAAKQSSLMVESLVQKLAHG</sequence>
<gene>
    <name evidence="1" type="primary">mtnN</name>
    <name type="ordered locus">SFV_0144</name>
</gene>
<keyword id="KW-0028">Amino-acid biosynthesis</keyword>
<keyword id="KW-0378">Hydrolase</keyword>
<keyword id="KW-0486">Methionine biosynthesis</keyword>
<evidence type="ECO:0000255" key="1">
    <source>
        <dbReference type="HAMAP-Rule" id="MF_01684"/>
    </source>
</evidence>
<proteinExistence type="inferred from homology"/>
<feature type="chain" id="PRO_0000359359" description="5'-methylthioadenosine/S-adenosylhomocysteine nucleosidase">
    <location>
        <begin position="1"/>
        <end position="232"/>
    </location>
</feature>
<feature type="active site" description="Proton acceptor" evidence="1">
    <location>
        <position position="12"/>
    </location>
</feature>
<feature type="active site" description="Proton donor" evidence="1">
    <location>
        <position position="197"/>
    </location>
</feature>
<feature type="binding site" evidence="1">
    <location>
        <position position="78"/>
    </location>
    <ligand>
        <name>substrate</name>
    </ligand>
</feature>
<feature type="binding site" evidence="1">
    <location>
        <position position="152"/>
    </location>
    <ligand>
        <name>substrate</name>
    </ligand>
</feature>
<feature type="binding site" evidence="1">
    <location>
        <begin position="173"/>
        <end position="174"/>
    </location>
    <ligand>
        <name>substrate</name>
    </ligand>
</feature>
<organism>
    <name type="scientific">Shigella flexneri serotype 5b (strain 8401)</name>
    <dbReference type="NCBI Taxonomy" id="373384"/>
    <lineage>
        <taxon>Bacteria</taxon>
        <taxon>Pseudomonadati</taxon>
        <taxon>Pseudomonadota</taxon>
        <taxon>Gammaproteobacteria</taxon>
        <taxon>Enterobacterales</taxon>
        <taxon>Enterobacteriaceae</taxon>
        <taxon>Shigella</taxon>
    </lineage>
</organism>
<dbReference type="EC" id="3.2.2.9" evidence="1"/>
<dbReference type="EMBL" id="CP000266">
    <property type="protein sequence ID" value="ABF02429.1"/>
    <property type="molecule type" value="Genomic_DNA"/>
</dbReference>
<dbReference type="RefSeq" id="WP_000689844.1">
    <property type="nucleotide sequence ID" value="NC_008258.1"/>
</dbReference>
<dbReference type="SMR" id="Q0T847"/>
<dbReference type="GeneID" id="93777267"/>
<dbReference type="KEGG" id="sfv:SFV_0144"/>
<dbReference type="HOGENOM" id="CLU_031248_2_2_6"/>
<dbReference type="UniPathway" id="UPA00904">
    <property type="reaction ID" value="UER00871"/>
</dbReference>
<dbReference type="Proteomes" id="UP000000659">
    <property type="component" value="Chromosome"/>
</dbReference>
<dbReference type="GO" id="GO:0005829">
    <property type="term" value="C:cytosol"/>
    <property type="evidence" value="ECO:0007669"/>
    <property type="project" value="TreeGrafter"/>
</dbReference>
<dbReference type="GO" id="GO:0008782">
    <property type="term" value="F:adenosylhomocysteine nucleosidase activity"/>
    <property type="evidence" value="ECO:0007669"/>
    <property type="project" value="UniProtKB-UniRule"/>
</dbReference>
<dbReference type="GO" id="GO:0008930">
    <property type="term" value="F:methylthioadenosine nucleosidase activity"/>
    <property type="evidence" value="ECO:0007669"/>
    <property type="project" value="UniProtKB-UniRule"/>
</dbReference>
<dbReference type="GO" id="GO:0019509">
    <property type="term" value="P:L-methionine salvage from methylthioadenosine"/>
    <property type="evidence" value="ECO:0007669"/>
    <property type="project" value="UniProtKB-UniRule"/>
</dbReference>
<dbReference type="GO" id="GO:0019284">
    <property type="term" value="P:L-methionine salvage from S-adenosylmethionine"/>
    <property type="evidence" value="ECO:0007669"/>
    <property type="project" value="TreeGrafter"/>
</dbReference>
<dbReference type="GO" id="GO:0046124">
    <property type="term" value="P:purine deoxyribonucleoside catabolic process"/>
    <property type="evidence" value="ECO:0007669"/>
    <property type="project" value="UniProtKB-UniRule"/>
</dbReference>
<dbReference type="CDD" id="cd09008">
    <property type="entry name" value="MTAN"/>
    <property type="match status" value="1"/>
</dbReference>
<dbReference type="FunFam" id="3.40.50.1580:FF:000001">
    <property type="entry name" value="MTA/SAH nucleosidase family protein"/>
    <property type="match status" value="1"/>
</dbReference>
<dbReference type="Gene3D" id="3.40.50.1580">
    <property type="entry name" value="Nucleoside phosphorylase domain"/>
    <property type="match status" value="1"/>
</dbReference>
<dbReference type="HAMAP" id="MF_01684">
    <property type="entry name" value="Salvage_MtnN"/>
    <property type="match status" value="1"/>
</dbReference>
<dbReference type="InterPro" id="IPR010049">
    <property type="entry name" value="MTA_SAH_Nsdase"/>
</dbReference>
<dbReference type="InterPro" id="IPR000845">
    <property type="entry name" value="Nucleoside_phosphorylase_d"/>
</dbReference>
<dbReference type="InterPro" id="IPR035994">
    <property type="entry name" value="Nucleoside_phosphorylase_sf"/>
</dbReference>
<dbReference type="NCBIfam" id="TIGR01704">
    <property type="entry name" value="MTA_SAH-Nsdase"/>
    <property type="match status" value="1"/>
</dbReference>
<dbReference type="NCBIfam" id="NF004079">
    <property type="entry name" value="PRK05584.1"/>
    <property type="match status" value="1"/>
</dbReference>
<dbReference type="PANTHER" id="PTHR46832">
    <property type="entry name" value="5'-METHYLTHIOADENOSINE/S-ADENOSYLHOMOCYSTEINE NUCLEOSIDASE"/>
    <property type="match status" value="1"/>
</dbReference>
<dbReference type="PANTHER" id="PTHR46832:SF1">
    <property type="entry name" value="5'-METHYLTHIOADENOSINE_S-ADENOSYLHOMOCYSTEINE NUCLEOSIDASE"/>
    <property type="match status" value="1"/>
</dbReference>
<dbReference type="Pfam" id="PF01048">
    <property type="entry name" value="PNP_UDP_1"/>
    <property type="match status" value="1"/>
</dbReference>
<dbReference type="SUPFAM" id="SSF53167">
    <property type="entry name" value="Purine and uridine phosphorylases"/>
    <property type="match status" value="1"/>
</dbReference>